<reference key="1">
    <citation type="journal article" date="1996" name="Science">
        <title>Complete genome sequence of the methanogenic archaeon, Methanococcus jannaschii.</title>
        <authorList>
            <person name="Bult C.J."/>
            <person name="White O."/>
            <person name="Olsen G.J."/>
            <person name="Zhou L."/>
            <person name="Fleischmann R.D."/>
            <person name="Sutton G.G."/>
            <person name="Blake J.A."/>
            <person name="FitzGerald L.M."/>
            <person name="Clayton R.A."/>
            <person name="Gocayne J.D."/>
            <person name="Kerlavage A.R."/>
            <person name="Dougherty B.A."/>
            <person name="Tomb J.-F."/>
            <person name="Adams M.D."/>
            <person name="Reich C.I."/>
            <person name="Overbeek R."/>
            <person name="Kirkness E.F."/>
            <person name="Weinstock K.G."/>
            <person name="Merrick J.M."/>
            <person name="Glodek A."/>
            <person name="Scott J.L."/>
            <person name="Geoghagen N.S.M."/>
            <person name="Weidman J.F."/>
            <person name="Fuhrmann J.L."/>
            <person name="Nguyen D."/>
            <person name="Utterback T.R."/>
            <person name="Kelley J.M."/>
            <person name="Peterson J.D."/>
            <person name="Sadow P.W."/>
            <person name="Hanna M.C."/>
            <person name="Cotton M.D."/>
            <person name="Roberts K.M."/>
            <person name="Hurst M.A."/>
            <person name="Kaine B.P."/>
            <person name="Borodovsky M."/>
            <person name="Klenk H.-P."/>
            <person name="Fraser C.M."/>
            <person name="Smith H.O."/>
            <person name="Woese C.R."/>
            <person name="Venter J.C."/>
        </authorList>
    </citation>
    <scope>NUCLEOTIDE SEQUENCE [LARGE SCALE GENOMIC DNA]</scope>
    <source>
        <strain>ATCC 43067 / DSM 2661 / JAL-1 / JCM 10045 / NBRC 100440</strain>
    </source>
</reference>
<accession>Q58538</accession>
<comment type="subcellular location">
    <subcellularLocation>
        <location evidence="2">Membrane</location>
        <topology evidence="2">Single-pass membrane protein</topology>
    </subcellularLocation>
</comment>
<name>Y1138_METJA</name>
<sequence>MKSVKKLLLLAFAVCLAVGFSGCLEQPKIEVVGQKIQKVDADNTKIEIQVLVDNPNPIGISIDKISFDIYALVGGDKIYLGHGEQSNIKITSGNTTFTLPVTISNKKLVEVALKEKSTKIPIEIKGDIAVNLFITKVNIPIDIQQEIDVSAIAKEEVLNQLNNLNPNQIQSIAQ</sequence>
<evidence type="ECO:0000255" key="1"/>
<evidence type="ECO:0000305" key="2"/>
<proteinExistence type="predicted"/>
<dbReference type="EMBL" id="L77117">
    <property type="protein sequence ID" value="AAB99145.1"/>
    <property type="molecule type" value="Genomic_DNA"/>
</dbReference>
<dbReference type="PIR" id="A64442">
    <property type="entry name" value="A64442"/>
</dbReference>
<dbReference type="RefSeq" id="WP_010870649.1">
    <property type="nucleotide sequence ID" value="NC_000909.1"/>
</dbReference>
<dbReference type="SMR" id="Q58538"/>
<dbReference type="PaxDb" id="243232-MJ_1138"/>
<dbReference type="EnsemblBacteria" id="AAB99145">
    <property type="protein sequence ID" value="AAB99145"/>
    <property type="gene ID" value="MJ_1138"/>
</dbReference>
<dbReference type="GeneID" id="1452034"/>
<dbReference type="KEGG" id="mja:MJ_1138"/>
<dbReference type="eggNOG" id="arCOG03788">
    <property type="taxonomic scope" value="Archaea"/>
</dbReference>
<dbReference type="HOGENOM" id="CLU_1559485_0_0_2"/>
<dbReference type="InParanoid" id="Q58538"/>
<dbReference type="OrthoDB" id="105458at2157"/>
<dbReference type="Proteomes" id="UP000000805">
    <property type="component" value="Chromosome"/>
</dbReference>
<dbReference type="GO" id="GO:0016020">
    <property type="term" value="C:membrane"/>
    <property type="evidence" value="ECO:0007669"/>
    <property type="project" value="UniProtKB-SubCell"/>
</dbReference>
<dbReference type="GO" id="GO:0009269">
    <property type="term" value="P:response to desiccation"/>
    <property type="evidence" value="ECO:0007669"/>
    <property type="project" value="InterPro"/>
</dbReference>
<dbReference type="Gene3D" id="2.60.40.1820">
    <property type="match status" value="1"/>
</dbReference>
<dbReference type="InterPro" id="IPR004864">
    <property type="entry name" value="LEA_2"/>
</dbReference>
<dbReference type="InterPro" id="IPR013990">
    <property type="entry name" value="WHy-dom"/>
</dbReference>
<dbReference type="Pfam" id="PF03168">
    <property type="entry name" value="LEA_2"/>
    <property type="match status" value="1"/>
</dbReference>
<dbReference type="SMART" id="SM00769">
    <property type="entry name" value="WHy"/>
    <property type="match status" value="1"/>
</dbReference>
<dbReference type="SUPFAM" id="SSF117070">
    <property type="entry name" value="LEA14-like"/>
    <property type="match status" value="1"/>
</dbReference>
<dbReference type="PROSITE" id="PS51257">
    <property type="entry name" value="PROKAR_LIPOPROTEIN"/>
    <property type="match status" value="1"/>
</dbReference>
<protein>
    <recommendedName>
        <fullName>Uncharacterized protein MJ1138</fullName>
    </recommendedName>
</protein>
<organism>
    <name type="scientific">Methanocaldococcus jannaschii (strain ATCC 43067 / DSM 2661 / JAL-1 / JCM 10045 / NBRC 100440)</name>
    <name type="common">Methanococcus jannaschii</name>
    <dbReference type="NCBI Taxonomy" id="243232"/>
    <lineage>
        <taxon>Archaea</taxon>
        <taxon>Methanobacteriati</taxon>
        <taxon>Methanobacteriota</taxon>
        <taxon>Methanomada group</taxon>
        <taxon>Methanococci</taxon>
        <taxon>Methanococcales</taxon>
        <taxon>Methanocaldococcaceae</taxon>
        <taxon>Methanocaldococcus</taxon>
    </lineage>
</organism>
<keyword id="KW-0472">Membrane</keyword>
<keyword id="KW-1185">Reference proteome</keyword>
<keyword id="KW-0812">Transmembrane</keyword>
<keyword id="KW-1133">Transmembrane helix</keyword>
<feature type="chain" id="PRO_0000107185" description="Uncharacterized protein MJ1138">
    <location>
        <begin position="1"/>
        <end position="174"/>
    </location>
</feature>
<feature type="transmembrane region" description="Helical" evidence="1">
    <location>
        <begin position="7"/>
        <end position="24"/>
    </location>
</feature>
<gene>
    <name type="ordered locus">MJ1138</name>
</gene>